<feature type="chain" id="PRO_1000148794" description="Vitamin B12 import ATP-binding protein BtuD">
    <location>
        <begin position="1"/>
        <end position="249"/>
    </location>
</feature>
<feature type="domain" description="ABC transporter" evidence="1">
    <location>
        <begin position="1"/>
        <end position="233"/>
    </location>
</feature>
<feature type="binding site" evidence="1">
    <location>
        <begin position="33"/>
        <end position="40"/>
    </location>
    <ligand>
        <name>ATP</name>
        <dbReference type="ChEBI" id="CHEBI:30616"/>
    </ligand>
</feature>
<protein>
    <recommendedName>
        <fullName evidence="1">Vitamin B12 import ATP-binding protein BtuD</fullName>
        <ecNumber evidence="1">7.6.2.8</ecNumber>
    </recommendedName>
    <alternativeName>
        <fullName evidence="1">Vitamin B12-transporting ATPase</fullName>
    </alternativeName>
</protein>
<evidence type="ECO:0000255" key="1">
    <source>
        <dbReference type="HAMAP-Rule" id="MF_01005"/>
    </source>
</evidence>
<name>BTUD_ECO55</name>
<gene>
    <name evidence="1" type="primary">btuD</name>
    <name type="ordered locus">EC55989_1877</name>
</gene>
<proteinExistence type="inferred from homology"/>
<keyword id="KW-0067">ATP-binding</keyword>
<keyword id="KW-0997">Cell inner membrane</keyword>
<keyword id="KW-1003">Cell membrane</keyword>
<keyword id="KW-0472">Membrane</keyword>
<keyword id="KW-0547">Nucleotide-binding</keyword>
<keyword id="KW-1185">Reference proteome</keyword>
<keyword id="KW-1278">Translocase</keyword>
<keyword id="KW-0813">Transport</keyword>
<organism>
    <name type="scientific">Escherichia coli (strain 55989 / EAEC)</name>
    <dbReference type="NCBI Taxonomy" id="585055"/>
    <lineage>
        <taxon>Bacteria</taxon>
        <taxon>Pseudomonadati</taxon>
        <taxon>Pseudomonadota</taxon>
        <taxon>Gammaproteobacteria</taxon>
        <taxon>Enterobacterales</taxon>
        <taxon>Enterobacteriaceae</taxon>
        <taxon>Escherichia</taxon>
    </lineage>
</organism>
<dbReference type="EC" id="7.6.2.8" evidence="1"/>
<dbReference type="EMBL" id="CU928145">
    <property type="protein sequence ID" value="CAU97735.1"/>
    <property type="molecule type" value="Genomic_DNA"/>
</dbReference>
<dbReference type="RefSeq" id="WP_000029466.1">
    <property type="nucleotide sequence ID" value="NC_011748.1"/>
</dbReference>
<dbReference type="SMR" id="B7L6I2"/>
<dbReference type="GeneID" id="93775873"/>
<dbReference type="KEGG" id="eck:EC55989_1877"/>
<dbReference type="HOGENOM" id="CLU_000604_1_11_6"/>
<dbReference type="Proteomes" id="UP000000746">
    <property type="component" value="Chromosome"/>
</dbReference>
<dbReference type="GO" id="GO:0005886">
    <property type="term" value="C:plasma membrane"/>
    <property type="evidence" value="ECO:0007669"/>
    <property type="project" value="UniProtKB-SubCell"/>
</dbReference>
<dbReference type="GO" id="GO:0015420">
    <property type="term" value="F:ABC-type vitamin B12 transporter activity"/>
    <property type="evidence" value="ECO:0007669"/>
    <property type="project" value="UniProtKB-UniRule"/>
</dbReference>
<dbReference type="GO" id="GO:0005524">
    <property type="term" value="F:ATP binding"/>
    <property type="evidence" value="ECO:0007669"/>
    <property type="project" value="UniProtKB-KW"/>
</dbReference>
<dbReference type="GO" id="GO:0016887">
    <property type="term" value="F:ATP hydrolysis activity"/>
    <property type="evidence" value="ECO:0007669"/>
    <property type="project" value="InterPro"/>
</dbReference>
<dbReference type="CDD" id="cd03214">
    <property type="entry name" value="ABC_Iron-Siderophores_B12_Hemin"/>
    <property type="match status" value="1"/>
</dbReference>
<dbReference type="FunFam" id="3.40.50.300:FF:000462">
    <property type="entry name" value="Vitamin B12 import ATP-binding protein BtuD"/>
    <property type="match status" value="1"/>
</dbReference>
<dbReference type="Gene3D" id="3.40.50.300">
    <property type="entry name" value="P-loop containing nucleotide triphosphate hydrolases"/>
    <property type="match status" value="1"/>
</dbReference>
<dbReference type="HAMAP" id="MF_01005">
    <property type="entry name" value="BtuD"/>
    <property type="match status" value="1"/>
</dbReference>
<dbReference type="InterPro" id="IPR003593">
    <property type="entry name" value="AAA+_ATPase"/>
</dbReference>
<dbReference type="InterPro" id="IPR003439">
    <property type="entry name" value="ABC_transporter-like_ATP-bd"/>
</dbReference>
<dbReference type="InterPro" id="IPR017871">
    <property type="entry name" value="ABC_transporter-like_CS"/>
</dbReference>
<dbReference type="InterPro" id="IPR023693">
    <property type="entry name" value="ABC_transptr_BtuD"/>
</dbReference>
<dbReference type="InterPro" id="IPR050153">
    <property type="entry name" value="Metal_Ion_Import_ABC"/>
</dbReference>
<dbReference type="InterPro" id="IPR027417">
    <property type="entry name" value="P-loop_NTPase"/>
</dbReference>
<dbReference type="NCBIfam" id="NF002981">
    <property type="entry name" value="PRK03695.1"/>
    <property type="match status" value="1"/>
</dbReference>
<dbReference type="PANTHER" id="PTHR42734">
    <property type="entry name" value="METAL TRANSPORT SYSTEM ATP-BINDING PROTEIN TM_0124-RELATED"/>
    <property type="match status" value="1"/>
</dbReference>
<dbReference type="PANTHER" id="PTHR42734:SF18">
    <property type="entry name" value="VITAMIN B12 IMPORT ATP-BINDING PROTEIN BTUD"/>
    <property type="match status" value="1"/>
</dbReference>
<dbReference type="Pfam" id="PF00005">
    <property type="entry name" value="ABC_tran"/>
    <property type="match status" value="1"/>
</dbReference>
<dbReference type="SMART" id="SM00382">
    <property type="entry name" value="AAA"/>
    <property type="match status" value="1"/>
</dbReference>
<dbReference type="SUPFAM" id="SSF52540">
    <property type="entry name" value="P-loop containing nucleoside triphosphate hydrolases"/>
    <property type="match status" value="1"/>
</dbReference>
<dbReference type="PROSITE" id="PS00211">
    <property type="entry name" value="ABC_TRANSPORTER_1"/>
    <property type="match status" value="1"/>
</dbReference>
<dbReference type="PROSITE" id="PS50893">
    <property type="entry name" value="ABC_TRANSPORTER_2"/>
    <property type="match status" value="1"/>
</dbReference>
<accession>B7L6I2</accession>
<sequence length="249" mass="27111">MSIVMQLQDVAESTRLGPLSGEVRAGEILHLVGPNGAGKSTLLARMAGMTSGKGSIQFAGQPLEAWSATKLALHRAYLSQQQTPPFAMPVWHYLTLHQHDKTRTELLNDVAGALALDDKLGRSTNQLSGGEWQRVRLAAVVLQITPQANPAGQLLLLDEPMNSLDVAQQSALDKILSALCQQGLAIVMSSHDLNHTLRHAHRAWLLKGGKMLASGRREEVLTPPNLAQAYGMNFRRLDIEGHRMLISTI</sequence>
<reference key="1">
    <citation type="journal article" date="2009" name="PLoS Genet.">
        <title>Organised genome dynamics in the Escherichia coli species results in highly diverse adaptive paths.</title>
        <authorList>
            <person name="Touchon M."/>
            <person name="Hoede C."/>
            <person name="Tenaillon O."/>
            <person name="Barbe V."/>
            <person name="Baeriswyl S."/>
            <person name="Bidet P."/>
            <person name="Bingen E."/>
            <person name="Bonacorsi S."/>
            <person name="Bouchier C."/>
            <person name="Bouvet O."/>
            <person name="Calteau A."/>
            <person name="Chiapello H."/>
            <person name="Clermont O."/>
            <person name="Cruveiller S."/>
            <person name="Danchin A."/>
            <person name="Diard M."/>
            <person name="Dossat C."/>
            <person name="Karoui M.E."/>
            <person name="Frapy E."/>
            <person name="Garry L."/>
            <person name="Ghigo J.M."/>
            <person name="Gilles A.M."/>
            <person name="Johnson J."/>
            <person name="Le Bouguenec C."/>
            <person name="Lescat M."/>
            <person name="Mangenot S."/>
            <person name="Martinez-Jehanne V."/>
            <person name="Matic I."/>
            <person name="Nassif X."/>
            <person name="Oztas S."/>
            <person name="Petit M.A."/>
            <person name="Pichon C."/>
            <person name="Rouy Z."/>
            <person name="Ruf C.S."/>
            <person name="Schneider D."/>
            <person name="Tourret J."/>
            <person name="Vacherie B."/>
            <person name="Vallenet D."/>
            <person name="Medigue C."/>
            <person name="Rocha E.P.C."/>
            <person name="Denamur E."/>
        </authorList>
    </citation>
    <scope>NUCLEOTIDE SEQUENCE [LARGE SCALE GENOMIC DNA]</scope>
    <source>
        <strain>55989 / EAEC</strain>
    </source>
</reference>
<comment type="function">
    <text evidence="1">Part of the ABC transporter complex BtuCDF involved in vitamin B12 import. Responsible for energy coupling to the transport system.</text>
</comment>
<comment type="catalytic activity">
    <reaction evidence="1">
        <text>an R-cob(III)alamin(out) + ATP + H2O = an R-cob(III)alamin(in) + ADP + phosphate + H(+)</text>
        <dbReference type="Rhea" id="RHEA:17873"/>
        <dbReference type="ChEBI" id="CHEBI:15377"/>
        <dbReference type="ChEBI" id="CHEBI:15378"/>
        <dbReference type="ChEBI" id="CHEBI:30616"/>
        <dbReference type="ChEBI" id="CHEBI:43474"/>
        <dbReference type="ChEBI" id="CHEBI:140785"/>
        <dbReference type="ChEBI" id="CHEBI:456216"/>
        <dbReference type="EC" id="7.6.2.8"/>
    </reaction>
</comment>
<comment type="subunit">
    <text evidence="1">The complex is composed of two ATP-binding proteins (BtuD), two transmembrane proteins (BtuC) and a solute-binding protein (BtuF).</text>
</comment>
<comment type="subcellular location">
    <subcellularLocation>
        <location evidence="1">Cell inner membrane</location>
        <topology evidence="1">Peripheral membrane protein</topology>
    </subcellularLocation>
</comment>
<comment type="similarity">
    <text evidence="1">Belongs to the ABC transporter superfamily. Vitamin B12 importer (TC 3.A.1.13.1) family.</text>
</comment>